<proteinExistence type="evidence at protein level"/>
<reference evidence="4" key="1">
    <citation type="journal article" date="2011" name="J. Nat. Prod.">
        <title>A Kunitz proteinase inhibitor from corms of Xanthosoma blandum with bactericidal activity.</title>
        <authorList>
            <person name="Lima T.B."/>
            <person name="Silva O.N."/>
            <person name="Migliolo L."/>
            <person name="Souza-Filho C.R."/>
            <person name="Goncalves E.G."/>
            <person name="Vasconcelos I.M."/>
            <person name="Oliveira J.T."/>
            <person name="Amaral A.C."/>
            <person name="Franco O.L."/>
        </authorList>
    </citation>
    <scope>PROTEIN SEQUENCE</scope>
    <scope>FUNCTION</scope>
    <source>
        <tissue evidence="1">Corm</tissue>
    </source>
</reference>
<reference evidence="4" key="2">
    <citation type="submission" date="2011-06" db="UniProtKB">
        <authorList>
            <person name="Franco O.L."/>
        </authorList>
    </citation>
    <scope>SUBCELLULAR LOCATION</scope>
</reference>
<comment type="function">
    <text evidence="1">Serine protease inhibitor. Displays antimicrobial activity against the Gram-negative bacterium S.typhimurium ATCC 14028. Displays no hemolytic activity.</text>
</comment>
<comment type="subcellular location">
    <subcellularLocation>
        <location evidence="2">Cytoplasm</location>
    </subcellularLocation>
</comment>
<accession>P86930</accession>
<keyword id="KW-0044">Antibiotic</keyword>
<keyword id="KW-0929">Antimicrobial</keyword>
<keyword id="KW-0963">Cytoplasm</keyword>
<keyword id="KW-0903">Direct protein sequencing</keyword>
<keyword id="KW-0646">Protease inhibitor</keyword>
<keyword id="KW-0722">Serine protease inhibitor</keyword>
<sequence length="19" mass="2194">PVVDTTGNNPLQQQEEYYV</sequence>
<organism>
    <name type="scientific">Xanthosoma sagittifolium</name>
    <name type="common">Arrowleaf elephant's ear</name>
    <name type="synonym">Arum sagittifolium</name>
    <dbReference type="NCBI Taxonomy" id="28478"/>
    <lineage>
        <taxon>Eukaryota</taxon>
        <taxon>Viridiplantae</taxon>
        <taxon>Streptophyta</taxon>
        <taxon>Embryophyta</taxon>
        <taxon>Tracheophyta</taxon>
        <taxon>Spermatophyta</taxon>
        <taxon>Magnoliopsida</taxon>
        <taxon>Liliopsida</taxon>
        <taxon>Araceae</taxon>
        <taxon>Aroideae</taxon>
        <taxon>Caladieae</taxon>
        <taxon>Xanthosoma</taxon>
    </lineage>
</organism>
<dbReference type="GO" id="GO:0005737">
    <property type="term" value="C:cytoplasm"/>
    <property type="evidence" value="ECO:0007669"/>
    <property type="project" value="UniProtKB-SubCell"/>
</dbReference>
<dbReference type="GO" id="GO:0004867">
    <property type="term" value="F:serine-type endopeptidase inhibitor activity"/>
    <property type="evidence" value="ECO:0007669"/>
    <property type="project" value="UniProtKB-KW"/>
</dbReference>
<dbReference type="GO" id="GO:0042742">
    <property type="term" value="P:defense response to bacterium"/>
    <property type="evidence" value="ECO:0007669"/>
    <property type="project" value="UniProtKB-KW"/>
</dbReference>
<name>KTI1_XANSA</name>
<feature type="peptide" id="PRO_0000413067" description="Kunitz-type serine protease inhibitor 1" evidence="1">
    <location>
        <begin position="1"/>
        <end position="19" status="greater than"/>
    </location>
</feature>
<feature type="non-terminal residue" evidence="3">
    <location>
        <position position="19"/>
    </location>
</feature>
<evidence type="ECO:0000269" key="1">
    <source>
    </source>
</evidence>
<evidence type="ECO:0000269" key="2">
    <source ref="2"/>
</evidence>
<evidence type="ECO:0000303" key="3">
    <source>
    </source>
</evidence>
<evidence type="ECO:0000305" key="4"/>
<protein>
    <recommendedName>
        <fullName evidence="3">Kunitz-type serine protease inhibitor 1</fullName>
        <shortName evidence="3">Xb-KTI</shortName>
    </recommendedName>
</protein>